<proteinExistence type="evidence at protein level"/>
<accession>B6HFX8</accession>
<dbReference type="EC" id="4.2.3.-" evidence="7"/>
<dbReference type="EC" id="2.5.1.29" evidence="7"/>
<dbReference type="EMBL" id="AM920435">
    <property type="protein sequence ID" value="CAP86415.1"/>
    <property type="molecule type" value="Genomic_DNA"/>
</dbReference>
<dbReference type="RefSeq" id="XP_002563575.1">
    <property type="nucleotide sequence ID" value="XM_002563529.1"/>
</dbReference>
<dbReference type="SMR" id="B6HFX8"/>
<dbReference type="STRING" id="500485.B6HFX8"/>
<dbReference type="VEuPathDB" id="FungiDB:PCH_Pc20g10860"/>
<dbReference type="eggNOG" id="KOG0777">
    <property type="taxonomic scope" value="Eukaryota"/>
</dbReference>
<dbReference type="HOGENOM" id="CLU_014015_10_0_1"/>
<dbReference type="OMA" id="HITHYIG"/>
<dbReference type="OrthoDB" id="6921389at2759"/>
<dbReference type="BioCyc" id="PCHR:PC20G10860-MONOMER"/>
<dbReference type="UniPathway" id="UPA00213"/>
<dbReference type="Proteomes" id="UP000000724">
    <property type="component" value="Contig Pc00c20"/>
</dbReference>
<dbReference type="GO" id="GO:0046872">
    <property type="term" value="F:metal ion binding"/>
    <property type="evidence" value="ECO:0007669"/>
    <property type="project" value="UniProtKB-KW"/>
</dbReference>
<dbReference type="GO" id="GO:0004659">
    <property type="term" value="F:prenyltransferase activity"/>
    <property type="evidence" value="ECO:0007669"/>
    <property type="project" value="InterPro"/>
</dbReference>
<dbReference type="GO" id="GO:0010333">
    <property type="term" value="F:terpene synthase activity"/>
    <property type="evidence" value="ECO:0000314"/>
    <property type="project" value="GO_Central"/>
</dbReference>
<dbReference type="GO" id="GO:0140879">
    <property type="term" value="P:conidiogenone biosynthetic process"/>
    <property type="evidence" value="ECO:0000314"/>
    <property type="project" value="GO_Central"/>
</dbReference>
<dbReference type="Gene3D" id="1.10.600.10">
    <property type="entry name" value="Farnesyl Diphosphate Synthase"/>
    <property type="match status" value="2"/>
</dbReference>
<dbReference type="InterPro" id="IPR008949">
    <property type="entry name" value="Isoprenoid_synthase_dom_sf"/>
</dbReference>
<dbReference type="InterPro" id="IPR000092">
    <property type="entry name" value="Polyprenyl_synt"/>
</dbReference>
<dbReference type="InterPro" id="IPR033749">
    <property type="entry name" value="Polyprenyl_synt_CS"/>
</dbReference>
<dbReference type="PANTHER" id="PTHR12001">
    <property type="entry name" value="GERANYLGERANYL PYROPHOSPHATE SYNTHASE"/>
    <property type="match status" value="1"/>
</dbReference>
<dbReference type="PANTHER" id="PTHR12001:SF44">
    <property type="entry name" value="GERANYLGERANYL PYROPHOSPHATE SYNTHASE"/>
    <property type="match status" value="1"/>
</dbReference>
<dbReference type="Pfam" id="PF00348">
    <property type="entry name" value="polyprenyl_synt"/>
    <property type="match status" value="1"/>
</dbReference>
<dbReference type="Pfam" id="PF19086">
    <property type="entry name" value="Terpene_syn_C_2"/>
    <property type="match status" value="1"/>
</dbReference>
<dbReference type="SFLD" id="SFLDS00005">
    <property type="entry name" value="Isoprenoid_Synthase_Type_I"/>
    <property type="match status" value="1"/>
</dbReference>
<dbReference type="SUPFAM" id="SSF48576">
    <property type="entry name" value="Terpenoid synthases"/>
    <property type="match status" value="2"/>
</dbReference>
<dbReference type="PROSITE" id="PS00723">
    <property type="entry name" value="POLYPRENYL_SYNTHASE_1"/>
    <property type="match status" value="1"/>
</dbReference>
<dbReference type="PROSITE" id="PS00444">
    <property type="entry name" value="POLYPRENYL_SYNTHASE_2"/>
    <property type="match status" value="1"/>
</dbReference>
<organism>
    <name type="scientific">Penicillium rubens (strain ATCC 28089 / DSM 1075 / NRRL 1951 / Wisconsin 54-1255)</name>
    <name type="common">Penicillium chrysogenum</name>
    <dbReference type="NCBI Taxonomy" id="500485"/>
    <lineage>
        <taxon>Eukaryota</taxon>
        <taxon>Fungi</taxon>
        <taxon>Dikarya</taxon>
        <taxon>Ascomycota</taxon>
        <taxon>Pezizomycotina</taxon>
        <taxon>Eurotiomycetes</taxon>
        <taxon>Eurotiomycetidae</taxon>
        <taxon>Eurotiales</taxon>
        <taxon>Aspergillaceae</taxon>
        <taxon>Penicillium</taxon>
        <taxon>Penicillium chrysogenum species complex</taxon>
    </lineage>
</organism>
<evidence type="ECO:0000250" key="1">
    <source>
        <dbReference type="UniProtKB" id="A1DN30"/>
    </source>
</evidence>
<evidence type="ECO:0000250" key="2">
    <source>
        <dbReference type="UniProtKB" id="A2PZA5"/>
    </source>
</evidence>
<evidence type="ECO:0000250" key="3">
    <source>
        <dbReference type="UniProtKB" id="P9WEV7"/>
    </source>
</evidence>
<evidence type="ECO:0000250" key="4">
    <source>
        <dbReference type="UniProtKB" id="Q12051"/>
    </source>
</evidence>
<evidence type="ECO:0000250" key="5">
    <source>
        <dbReference type="UniProtKB" id="Q40577"/>
    </source>
</evidence>
<evidence type="ECO:0000256" key="6">
    <source>
        <dbReference type="SAM" id="MobiDB-lite"/>
    </source>
</evidence>
<evidence type="ECO:0000269" key="7">
    <source>
    </source>
</evidence>
<evidence type="ECO:0000303" key="8">
    <source>
    </source>
</evidence>
<evidence type="ECO:0000305" key="9"/>
<evidence type="ECO:0000305" key="10">
    <source>
    </source>
</evidence>
<keyword id="KW-0414">Isoprene biosynthesis</keyword>
<keyword id="KW-0456">Lyase</keyword>
<keyword id="KW-0460">Magnesium</keyword>
<keyword id="KW-0479">Metal-binding</keyword>
<keyword id="KW-0511">Multifunctional enzyme</keyword>
<keyword id="KW-1185">Reference proteome</keyword>
<keyword id="KW-0677">Repeat</keyword>
<keyword id="KW-0808">Transferase</keyword>
<reference key="1">
    <citation type="journal article" date="2008" name="Nat. Biotechnol.">
        <title>Genome sequencing and analysis of the filamentous fungus Penicillium chrysogenum.</title>
        <authorList>
            <person name="van den Berg M.A."/>
            <person name="Albang R."/>
            <person name="Albermann K."/>
            <person name="Badger J.H."/>
            <person name="Daran J.-M."/>
            <person name="Driessen A.J.M."/>
            <person name="Garcia-Estrada C."/>
            <person name="Fedorova N.D."/>
            <person name="Harris D.M."/>
            <person name="Heijne W.H.M."/>
            <person name="Joardar V.S."/>
            <person name="Kiel J.A.K.W."/>
            <person name="Kovalchuk A."/>
            <person name="Martin J.F."/>
            <person name="Nierman W.C."/>
            <person name="Nijland J.G."/>
            <person name="Pronk J.T."/>
            <person name="Roubos J.A."/>
            <person name="van der Klei I.J."/>
            <person name="van Peij N.N.M.E."/>
            <person name="Veenhuis M."/>
            <person name="von Doehren H."/>
            <person name="Wagner C."/>
            <person name="Wortman J.R."/>
            <person name="Bovenberg R.A.L."/>
        </authorList>
    </citation>
    <scope>NUCLEOTIDE SEQUENCE [LARGE SCALE GENOMIC DNA]</scope>
    <source>
        <strain>ATCC 28089 / DSM 1075 / NRRL 1951 / Wisconsin 54-1255</strain>
    </source>
</reference>
<reference key="2">
    <citation type="journal article" date="2019" name="Biosci. Biotechnol. Biochem.">
        <title>Biosynthetic study of conidiation-inducing factor conidiogenone: heterologous production and cyclization mechanism of a key bifunctional diterpene synthase.</title>
        <authorList>
            <person name="Shiina T."/>
            <person name="Nakagawa K."/>
            <person name="Fujisaki Y."/>
            <person name="Ozaki T."/>
            <person name="Liu C."/>
            <person name="Toyomasu T."/>
            <person name="Hashimoto M."/>
            <person name="Koshino H."/>
            <person name="Minami A."/>
            <person name="Kawaide H."/>
            <person name="Oikawa H."/>
        </authorList>
    </citation>
    <scope>FUNCTION</scope>
    <scope>CATALYTIC ACTIVITY</scope>
    <scope>PATHWAY</scope>
</reference>
<sequence>MADKITDEYAVGIDPEIYANNPAYSSLFNPYIHKQTIIADHVSVQCHIDLNGIDAVGSKFGNLNAHAGNFTSLCAPNCLPERFALVAYTVEYAFLHDALNQSGMTSVSTRVSDKAQRKSEVQAKIAAEYLRLDPVFGEWFLNKWQTFTACVKDVRSLEFPSLDDYLEFRIVDAAADWTLYNFRWGSGITLTPEEEKIADPMSYVAYAELCLVNDLFSWDKEYASHIKSNGDVPLVNAVHIVAVTQGLTHCAAKAVVQAEVRAHEERFCQLKEQYEATDKPSHEVLRWLRLLEHSMAGNWVWSLCVPRYCKVDRNPYKDHLEKYGSDAVRVLTPLDRLCWPKQEIKDMKQSELKDPSSSTYKSHFSPLEPNPGPEQMRLTISQTQQQRPVLNPYTYINSLPSKNVRQTLIAALNSWYKVPVKSLLIIEGAVNFLHNSSLLLDDIQDGSFLRRGRPVAHQIFGVGQTINTATYLMNEALYLIQMLSPSAVSVYTEIDEMRNLQLGQGRDLYWSYHTHVPTPAQYISMVDGKTGGLFRLISRLMRSEATKNSDLDISQFATLLGRHFQIRDDYQNLQSEDYTKNKGFCDDLDEGKLSFPIILSMQSPGFSNTALSSVFKGSQKGQTLSLEMKQYMLEEITARGAFSETKAVLRKLHTELLRLLIETEKKAGGVENWALRLLIMKLDIAEEKKVAPPKSDSHWGVNQRRAWKGCQKNGRPIDKACFLRAMEETLQK</sequence>
<comment type="function">
    <text evidence="7">Bifunctional terpene synthase; part of the gene cluster that mediates the biosynthesis of conidiogenone, a diterpene known to induce the conidiation (PubMed:30343633). The bifunctional terpene synthase PchDS converts isopentenyl diphosphate (IPP) and dimethylallyl diphosphate (DMAPP) into deoxyconidiogenol (PubMed:30343633). The C-terminal prenyltransferase (PT) domain of PchDS catalyzes formation of GGPP, whereas the N-terminal terpene cyclase (TC) domain catalyzes the cyclization of GGPP into deoxyconidiogenol (PubMed:30343633). The cytochrome P450 monooxygenase PchP450 then catalyzes two rounds of oxidation to furnish conidiogenone (PubMed:30343633).</text>
</comment>
<comment type="catalytic activity">
    <reaction evidence="7">
        <text>isopentenyl diphosphate + (2E,6E)-farnesyl diphosphate = (2E,6E,10E)-geranylgeranyl diphosphate + diphosphate</text>
        <dbReference type="Rhea" id="RHEA:17653"/>
        <dbReference type="ChEBI" id="CHEBI:33019"/>
        <dbReference type="ChEBI" id="CHEBI:58756"/>
        <dbReference type="ChEBI" id="CHEBI:128769"/>
        <dbReference type="ChEBI" id="CHEBI:175763"/>
        <dbReference type="EC" id="2.5.1.29"/>
    </reaction>
    <physiologicalReaction direction="left-to-right" evidence="7">
        <dbReference type="Rhea" id="RHEA:17654"/>
    </physiologicalReaction>
</comment>
<comment type="cofactor">
    <cofactor evidence="3">
        <name>Mg(2+)</name>
        <dbReference type="ChEBI" id="CHEBI:18420"/>
    </cofactor>
</comment>
<comment type="pathway">
    <text evidence="7">Secondary metabolite biosynthesis; terpenoid biosynthesis.</text>
</comment>
<comment type="subunit">
    <text evidence="2">Hexamer.</text>
</comment>
<comment type="domain">
    <text evidence="1">The conserved DDXXD motifs as well as the NSE/DTE motif are important for the catalytic activity, presumably through binding to Mg(2+).</text>
</comment>
<comment type="similarity">
    <text evidence="9">In the N-terminal section; belongs to the terpene synthase family.</text>
</comment>
<comment type="similarity">
    <text evidence="9">In the C-terminal section; belongs to the FPP/GGPP synthase family.</text>
</comment>
<name>PCHDS_PENRW</name>
<feature type="chain" id="PRO_0000453704" description="Conidiogenone synthase">
    <location>
        <begin position="1"/>
        <end position="732"/>
    </location>
</feature>
<feature type="region of interest" description="Terpene cyclase" evidence="10">
    <location>
        <begin position="1"/>
        <end position="311"/>
    </location>
</feature>
<feature type="region of interest" description="Prenyltransferase" evidence="10">
    <location>
        <begin position="312"/>
        <end position="732"/>
    </location>
</feature>
<feature type="region of interest" description="Disordered" evidence="6">
    <location>
        <begin position="348"/>
        <end position="370"/>
    </location>
</feature>
<feature type="short sequence motif" description="DDXXD 1" evidence="1">
    <location>
        <begin position="97"/>
        <end position="101"/>
    </location>
</feature>
<feature type="short sequence motif" description="NSE/DTE" evidence="1">
    <location>
        <begin position="213"/>
        <end position="221"/>
    </location>
</feature>
<feature type="short sequence motif" description="DDXXD 2" evidence="1">
    <location>
        <begin position="441"/>
        <end position="445"/>
    </location>
</feature>
<feature type="binding site" evidence="5">
    <location>
        <position position="97"/>
    </location>
    <ligand>
        <name>Mg(2+)</name>
        <dbReference type="ChEBI" id="CHEBI:18420"/>
        <label>1</label>
    </ligand>
</feature>
<feature type="binding site" evidence="5">
    <location>
        <position position="97"/>
    </location>
    <ligand>
        <name>Mg(2+)</name>
        <dbReference type="ChEBI" id="CHEBI:18420"/>
        <label>2</label>
    </ligand>
</feature>
<feature type="binding site" evidence="2">
    <location>
        <position position="97"/>
    </location>
    <ligand>
        <name>substrate</name>
    </ligand>
</feature>
<feature type="binding site" evidence="2">
    <location>
        <begin position="169"/>
        <end position="172"/>
    </location>
    <ligand>
        <name>substrate</name>
    </ligand>
</feature>
<feature type="binding site" evidence="2">
    <location>
        <position position="213"/>
    </location>
    <ligand>
        <name>substrate</name>
    </ligand>
</feature>
<feature type="binding site" evidence="2">
    <location>
        <begin position="217"/>
        <end position="221"/>
    </location>
    <ligand>
        <name>substrate</name>
    </ligand>
</feature>
<feature type="binding site" evidence="2">
    <location>
        <begin position="307"/>
        <end position="308"/>
    </location>
    <ligand>
        <name>substrate</name>
    </ligand>
</feature>
<feature type="binding site" evidence="4">
    <location>
        <position position="402"/>
    </location>
    <ligand>
        <name>isopentenyl diphosphate</name>
        <dbReference type="ChEBI" id="CHEBI:128769"/>
    </ligand>
</feature>
<feature type="binding site" evidence="4">
    <location>
        <position position="405"/>
    </location>
    <ligand>
        <name>isopentenyl diphosphate</name>
        <dbReference type="ChEBI" id="CHEBI:128769"/>
    </ligand>
</feature>
<feature type="binding site" evidence="4">
    <location>
        <position position="434"/>
    </location>
    <ligand>
        <name>isopentenyl diphosphate</name>
        <dbReference type="ChEBI" id="CHEBI:128769"/>
    </ligand>
</feature>
<feature type="binding site" evidence="4">
    <location>
        <position position="441"/>
    </location>
    <ligand>
        <name>Mg(2+)</name>
        <dbReference type="ChEBI" id="CHEBI:18420"/>
        <label>3</label>
    </ligand>
</feature>
<feature type="binding site" evidence="4">
    <location>
        <position position="441"/>
    </location>
    <ligand>
        <name>Mg(2+)</name>
        <dbReference type="ChEBI" id="CHEBI:18420"/>
        <label>4</label>
    </ligand>
</feature>
<feature type="binding site" evidence="4">
    <location>
        <position position="445"/>
    </location>
    <ligand>
        <name>Mg(2+)</name>
        <dbReference type="ChEBI" id="CHEBI:18420"/>
        <label>3</label>
    </ligand>
</feature>
<feature type="binding site" evidence="4">
    <location>
        <position position="445"/>
    </location>
    <ligand>
        <name>Mg(2+)</name>
        <dbReference type="ChEBI" id="CHEBI:18420"/>
        <label>4</label>
    </ligand>
</feature>
<feature type="binding site" evidence="4">
    <location>
        <position position="450"/>
    </location>
    <ligand>
        <name>dimethylallyl diphosphate</name>
        <dbReference type="ChEBI" id="CHEBI:57623"/>
    </ligand>
</feature>
<feature type="binding site" evidence="4">
    <location>
        <position position="451"/>
    </location>
    <ligand>
        <name>isopentenyl diphosphate</name>
        <dbReference type="ChEBI" id="CHEBI:128769"/>
    </ligand>
</feature>
<feature type="binding site" evidence="4">
    <location>
        <position position="529"/>
    </location>
    <ligand>
        <name>dimethylallyl diphosphate</name>
        <dbReference type="ChEBI" id="CHEBI:57623"/>
    </ligand>
</feature>
<feature type="binding site" evidence="4">
    <location>
        <position position="530"/>
    </location>
    <ligand>
        <name>dimethylallyl diphosphate</name>
        <dbReference type="ChEBI" id="CHEBI:57623"/>
    </ligand>
</feature>
<feature type="binding site" evidence="4">
    <location>
        <position position="565"/>
    </location>
    <ligand>
        <name>dimethylallyl diphosphate</name>
        <dbReference type="ChEBI" id="CHEBI:57623"/>
    </ligand>
</feature>
<feature type="binding site" evidence="4">
    <location>
        <position position="572"/>
    </location>
    <ligand>
        <name>dimethylallyl diphosphate</name>
        <dbReference type="ChEBI" id="CHEBI:57623"/>
    </ligand>
</feature>
<feature type="binding site" evidence="4">
    <location>
        <position position="582"/>
    </location>
    <ligand>
        <name>dimethylallyl diphosphate</name>
        <dbReference type="ChEBI" id="CHEBI:57623"/>
    </ligand>
</feature>
<feature type="binding site" evidence="4">
    <location>
        <position position="592"/>
    </location>
    <ligand>
        <name>dimethylallyl diphosphate</name>
        <dbReference type="ChEBI" id="CHEBI:57623"/>
    </ligand>
</feature>
<protein>
    <recommendedName>
        <fullName evidence="8">Conidiogenone synthase</fullName>
    </recommendedName>
    <alternativeName>
        <fullName evidence="8">Bifunctional terpene synthase PchDS</fullName>
        <shortName evidence="8">BFTS PchDS</shortName>
    </alternativeName>
    <alternativeName>
        <fullName evidence="8">Conidiogenone biosynthesis cluster protein PchDS</fullName>
    </alternativeName>
    <alternativeName>
        <fullName evidence="8">Diterpene synthase PchDS</fullName>
        <shortName evidence="8">DS</shortName>
    </alternativeName>
    <domain>
        <recommendedName>
            <fullName evidence="8">Terpene cyclase</fullName>
            <ecNumber evidence="7">4.2.3.-</ecNumber>
        </recommendedName>
    </domain>
    <domain>
        <recommendedName>
            <fullName evidence="8">Geranylgeranyl diphosphate synthase</fullName>
            <shortName evidence="8">GGDP synthase</shortName>
            <shortName evidence="8">GGS</shortName>
            <ecNumber evidence="7">2.5.1.29</ecNumber>
        </recommendedName>
    </domain>
</protein>
<gene>
    <name evidence="8" type="primary">PchDS</name>
    <name type="ORF">Pc20g10860</name>
    <name type="ORF">PCH_Pc20g10860</name>
</gene>